<comment type="function">
    <text evidence="3">RNA-binding protein which may be involved in spermatogenesis. Required for sperm development, possibly by participating in pre-mRNA splicing in the testis.</text>
</comment>
<comment type="subunit">
    <text>Interacts with splicing factor proteins SFRS3/SRP20, TRA2B/SFRS10, KHDRBS1/SAM68 and KHDRBS3.</text>
</comment>
<comment type="interaction">
    <interactant intactId="EBI-8642021">
        <id>Q15415</id>
    </interactant>
    <interactant intactId="EBI-8637627">
        <id>Q8WTP8</id>
        <label>AEN</label>
    </interactant>
    <organismsDiffer>false</organismsDiffer>
    <experiments>3</experiments>
</comment>
<comment type="interaction">
    <interactant intactId="EBI-8642021">
        <id>Q15415</id>
    </interactant>
    <interactant intactId="EBI-1044593">
        <id>Q9NRW3</id>
        <label>APOBEC3C</label>
    </interactant>
    <organismsDiffer>false</organismsDiffer>
    <experiments>6</experiments>
</comment>
<comment type="interaction">
    <interactant intactId="EBI-8642021">
        <id>Q15415</id>
    </interactant>
    <interactant intactId="EBI-745934">
        <id>Q14781</id>
        <label>CBX2</label>
    </interactant>
    <organismsDiffer>false</organismsDiffer>
    <experiments>3</experiments>
</comment>
<comment type="interaction">
    <interactant intactId="EBI-8642021">
        <id>Q15415</id>
    </interactant>
    <interactant intactId="EBI-11974585">
        <id>Q14781-2</id>
        <label>CBX2</label>
    </interactant>
    <organismsDiffer>false</organismsDiffer>
    <experiments>3</experiments>
</comment>
<comment type="interaction">
    <interactant intactId="EBI-8642021">
        <id>Q15415</id>
    </interactant>
    <interactant intactId="EBI-538850">
        <id>Q14011</id>
        <label>CIRBP</label>
    </interactant>
    <organismsDiffer>false</organismsDiffer>
    <experiments>3</experiments>
</comment>
<comment type="interaction">
    <interactant intactId="EBI-8642021">
        <id>Q15415</id>
    </interactant>
    <interactant intactId="EBI-745579">
        <id>P49761</id>
        <label>CLK3</label>
    </interactant>
    <organismsDiffer>false</organismsDiffer>
    <experiments>3</experiments>
</comment>
<comment type="interaction">
    <interactant intactId="EBI-8642021">
        <id>Q15415</id>
    </interactant>
    <interactant intactId="EBI-741032">
        <id>Q8NE01</id>
        <label>CNNM3</label>
    </interactant>
    <organismsDiffer>false</organismsDiffer>
    <experiments>3</experiments>
</comment>
<comment type="interaction">
    <interactant intactId="EBI-8642021">
        <id>Q15415</id>
    </interactant>
    <interactant intactId="EBI-6255981">
        <id>Q7L775</id>
        <label>EPM2AIP1</label>
    </interactant>
    <organismsDiffer>false</organismsDiffer>
    <experiments>3</experiments>
</comment>
<comment type="interaction">
    <interactant intactId="EBI-8642021">
        <id>Q15415</id>
    </interactant>
    <interactant intactId="EBI-747421">
        <id>Q03014</id>
        <label>HHEX</label>
    </interactant>
    <organismsDiffer>false</organismsDiffer>
    <experiments>3</experiments>
</comment>
<comment type="interaction">
    <interactant intactId="EBI-8642021">
        <id>Q15415</id>
    </interactant>
    <interactant intactId="EBI-304185">
        <id>P61978</id>
        <label>HNRNPK</label>
    </interactant>
    <organismsDiffer>false</organismsDiffer>
    <experiments>4</experiments>
</comment>
<comment type="interaction">
    <interactant intactId="EBI-8642021">
        <id>Q15415</id>
    </interactant>
    <interactant intactId="EBI-7060731">
        <id>P61978-2</id>
        <label>HNRNPK</label>
    </interactant>
    <organismsDiffer>false</organismsDiffer>
    <experiments>3</experiments>
</comment>
<comment type="interaction">
    <interactant intactId="EBI-8642021">
        <id>Q15415</id>
    </interactant>
    <interactant intactId="EBI-739832">
        <id>Q8TBB1</id>
        <label>LNX1</label>
    </interactant>
    <organismsDiffer>false</organismsDiffer>
    <experiments>3</experiments>
</comment>
<comment type="interaction">
    <interactant intactId="EBI-8642021">
        <id>Q15415</id>
    </interactant>
    <interactant intactId="EBI-748927">
        <id>Q9NQX5</id>
        <label>NPDC1</label>
    </interactant>
    <organismsDiffer>false</organismsDiffer>
    <experiments>3</experiments>
</comment>
<comment type="interaction">
    <interactant intactId="EBI-8642021">
        <id>Q15415</id>
    </interactant>
    <interactant intactId="EBI-10329013">
        <id>Q9Y5E9</id>
        <label>PCDHB14</label>
    </interactant>
    <organismsDiffer>false</organismsDiffer>
    <experiments>6</experiments>
</comment>
<comment type="interaction">
    <interactant intactId="EBI-8642021">
        <id>Q15415</id>
    </interactant>
    <interactant intactId="EBI-5235692">
        <id>O75864</id>
        <label>PPP1R37</label>
    </interactant>
    <organismsDiffer>false</organismsDiffer>
    <experiments>3</experiments>
</comment>
<comment type="interaction">
    <interactant intactId="EBI-8642021">
        <id>Q15415</id>
    </interactant>
    <interactant intactId="EBI-1567797">
        <id>Q8WWY3</id>
        <label>PRPF31</label>
    </interactant>
    <organismsDiffer>false</organismsDiffer>
    <experiments>9</experiments>
</comment>
<comment type="interaction">
    <interactant intactId="EBI-8642021">
        <id>Q15415</id>
    </interactant>
    <interactant intactId="EBI-2803328">
        <id>P79522</id>
        <label>PRR3</label>
    </interactant>
    <organismsDiffer>false</organismsDiffer>
    <experiments>7</experiments>
</comment>
<comment type="interaction">
    <interactant intactId="EBI-8642021">
        <id>Q15415</id>
    </interactant>
    <interactant intactId="EBI-744023">
        <id>Q9BTL3</id>
        <label>RAMAC</label>
    </interactant>
    <organismsDiffer>false</organismsDiffer>
    <experiments>3</experiments>
</comment>
<comment type="interaction">
    <interactant intactId="EBI-8642021">
        <id>Q15415</id>
    </interactant>
    <interactant intactId="EBI-740818">
        <id>Q9Y272</id>
        <label>RASD1</label>
    </interactant>
    <organismsDiffer>false</organismsDiffer>
    <experiments>6</experiments>
</comment>
<comment type="interaction">
    <interactant intactId="EBI-8642021">
        <id>Q15415</id>
    </interactant>
    <interactant intactId="EBI-721525">
        <id>P98175</id>
        <label>RBM10</label>
    </interactant>
    <organismsDiffer>false</organismsDiffer>
    <experiments>3</experiments>
</comment>
<comment type="interaction">
    <interactant intactId="EBI-8642021">
        <id>Q15415</id>
    </interactant>
    <interactant intactId="EBI-2949699">
        <id>P98179</id>
        <label>RBM3</label>
    </interactant>
    <organismsDiffer>false</organismsDiffer>
    <experiments>6</experiments>
</comment>
<comment type="interaction">
    <interactant intactId="EBI-8642021">
        <id>Q15415</id>
    </interactant>
    <interactant intactId="EBI-743526">
        <id>P38159</id>
        <label>RBMX</label>
    </interactant>
    <organismsDiffer>false</organismsDiffer>
    <experiments>6</experiments>
</comment>
<comment type="interaction">
    <interactant intactId="EBI-8642021">
        <id>Q15415</id>
    </interactant>
    <interactant intactId="EBI-11994018">
        <id>P0DJD3-2</id>
        <label>RBMY1A1</label>
    </interactant>
    <organismsDiffer>false</organismsDiffer>
    <experiments>3</experiments>
</comment>
<comment type="interaction">
    <interactant intactId="EBI-8642021">
        <id>Q15415</id>
    </interactant>
    <interactant intactId="EBI-11958200">
        <id>A6NEQ0</id>
        <label>RBMY1E</label>
    </interactant>
    <organismsDiffer>false</organismsDiffer>
    <experiments>3</experiments>
</comment>
<comment type="interaction">
    <interactant intactId="EBI-8642021">
        <id>Q15415</id>
    </interactant>
    <interactant intactId="EBI-8642021">
        <id>Q15415</id>
        <label>RBMY1J</label>
    </interactant>
    <organismsDiffer>false</organismsDiffer>
    <experiments>4</experiments>
</comment>
<comment type="interaction">
    <interactant intactId="EBI-8642021">
        <id>Q15415</id>
    </interactant>
    <interactant intactId="EBI-395959">
        <id>Q15287</id>
        <label>RNPS1</label>
    </interactant>
    <organismsDiffer>false</organismsDiffer>
    <experiments>3</experiments>
</comment>
<comment type="interaction">
    <interactant intactId="EBI-8642021">
        <id>Q15415</id>
    </interactant>
    <interactant intactId="EBI-607085">
        <id>P09012</id>
        <label>SNRPA</label>
    </interactant>
    <organismsDiffer>false</organismsDiffer>
    <experiments>3</experiments>
</comment>
<comment type="interaction">
    <interactant intactId="EBI-8642021">
        <id>Q15415</id>
    </interactant>
    <interactant intactId="EBI-11995806">
        <id>Q9H0A9-2</id>
        <label>SPATC1L</label>
    </interactant>
    <organismsDiffer>false</organismsDiffer>
    <experiments>3</experiments>
</comment>
<comment type="interaction">
    <interactant intactId="EBI-8642021">
        <id>Q15415</id>
    </interactant>
    <interactant intactId="EBI-725485">
        <id>P62995</id>
        <label>TRA2B</label>
    </interactant>
    <organismsDiffer>false</organismsDiffer>
    <experiments>3</experiments>
</comment>
<comment type="interaction">
    <interactant intactId="EBI-8642021">
        <id>Q15415</id>
    </interactant>
    <interactant intactId="EBI-11097439">
        <id>P26368-2</id>
        <label>U2AF2</label>
    </interactant>
    <organismsDiffer>false</organismsDiffer>
    <experiments>3</experiments>
</comment>
<comment type="interaction">
    <interactant intactId="EBI-8642021">
        <id>Q15415</id>
    </interactant>
    <interactant intactId="EBI-2849854">
        <id>Q96MU7</id>
        <label>YTHDC1</label>
    </interactant>
    <organismsDiffer>false</organismsDiffer>
    <experiments>6</experiments>
</comment>
<comment type="interaction">
    <interactant intactId="EBI-8642021">
        <id>Q15415</id>
    </interactant>
    <interactant intactId="EBI-1210473">
        <id>Q96PQ6</id>
        <label>ZNF317</label>
    </interactant>
    <organismsDiffer>false</organismsDiffer>
    <experiments>5</experiments>
</comment>
<comment type="interaction">
    <interactant intactId="EBI-8642021">
        <id>Q15415</id>
    </interactant>
    <interactant intactId="EBI-8651919">
        <id>Q66K41</id>
        <label>ZNF385C</label>
    </interactant>
    <organismsDiffer>false</organismsDiffer>
    <experiments>3</experiments>
</comment>
<comment type="interaction">
    <interactant intactId="EBI-8642021">
        <id>Q15415</id>
    </interactant>
    <interactant intactId="EBI-347633">
        <id>Q9H9D4</id>
        <label>ZNF408</label>
    </interactant>
    <organismsDiffer>false</organismsDiffer>
    <experiments>3</experiments>
</comment>
<comment type="interaction">
    <interactant intactId="EBI-8642021">
        <id>Q15415</id>
    </interactant>
    <interactant intactId="EBI-10240849">
        <id>Q3KQV3</id>
        <label>ZNF792</label>
    </interactant>
    <organismsDiffer>false</organismsDiffer>
    <experiments>3</experiments>
</comment>
<comment type="interaction">
    <interactant intactId="EBI-8642021">
        <id>Q15415</id>
    </interactant>
    <interactant intactId="EBI-11962574">
        <id>Q96EG3</id>
        <label>ZNF837</label>
    </interactant>
    <organismsDiffer>false</organismsDiffer>
    <experiments>3</experiments>
</comment>
<comment type="subcellular location">
    <subcellularLocation>
        <location>Nucleus</location>
    </subcellularLocation>
</comment>
<comment type="alternative products">
    <event type="alternative splicing"/>
    <isoform>
        <id>Q15415-1</id>
        <name>1</name>
        <sequence type="displayed"/>
    </isoform>
    <isoform>
        <id>Q15415-2</id>
        <name>2</name>
        <sequence type="described" ref="VSP_030217 VSP_030218"/>
    </isoform>
</comment>
<comment type="tissue specificity">
    <text evidence="3">Testis-specific.</text>
</comment>
<comment type="developmental stage">
    <text>Expressed in all of the transcriptionally active stages of germ cell development from spermatogonia through spermatocytes to round spermatids.</text>
</comment>
<comment type="miscellaneous">
    <text>The RBMY1 proteins are encoded by repeated regions of the Y chromosome, mostly within the AZFb region. The exact number of functional copies is unclear and may vary between individuals, and some of them may represent pseudogenes. The proteins are very similar, which makes the characterization of each protein difficult. Thus, most experiments do not discriminate between the different members. One can therefore suppose that reported interactions with a RBMY1 protein involve all the proteins.</text>
</comment>
<gene>
    <name type="primary">RBMY1F</name>
    <name type="synonym">YRRM2</name>
</gene>
<gene>
    <name type="primary">RBMY1J</name>
</gene>
<reference key="1">
    <citation type="journal article" date="1993" name="Cell">
        <title>A Y chromosome gene family with RNA-binding protein homology: candidates for the azoospermia factor AZF controlling human spermatogenesis.</title>
        <authorList>
            <person name="Ma K."/>
            <person name="Inglis J.D."/>
            <person name="Sharkey A."/>
            <person name="Bickmore W.A."/>
            <person name="Hill R.E."/>
            <person name="Prosser E.J."/>
            <person name="Speedson R.M."/>
            <person name="Thomson E.J."/>
            <person name="Jobling M."/>
        </authorList>
    </citation>
    <scope>NUCLEOTIDE SEQUENCE [MRNA] (ISOFORM 2)</scope>
    <scope>FUNCTION</scope>
    <scope>TISSUE SPECIFICITY</scope>
    <source>
        <tissue>Testis</tissue>
    </source>
</reference>
<reference key="2">
    <citation type="journal article" date="2004" name="Nat. Genet.">
        <title>Complete sequencing and characterization of 21,243 full-length human cDNAs.</title>
        <authorList>
            <person name="Ota T."/>
            <person name="Suzuki Y."/>
            <person name="Nishikawa T."/>
            <person name="Otsuki T."/>
            <person name="Sugiyama T."/>
            <person name="Irie R."/>
            <person name="Wakamatsu A."/>
            <person name="Hayashi K."/>
            <person name="Sato H."/>
            <person name="Nagai K."/>
            <person name="Kimura K."/>
            <person name="Makita H."/>
            <person name="Sekine M."/>
            <person name="Obayashi M."/>
            <person name="Nishi T."/>
            <person name="Shibahara T."/>
            <person name="Tanaka T."/>
            <person name="Ishii S."/>
            <person name="Yamamoto J."/>
            <person name="Saito K."/>
            <person name="Kawai Y."/>
            <person name="Isono Y."/>
            <person name="Nakamura Y."/>
            <person name="Nagahari K."/>
            <person name="Murakami K."/>
            <person name="Yasuda T."/>
            <person name="Iwayanagi T."/>
            <person name="Wagatsuma M."/>
            <person name="Shiratori A."/>
            <person name="Sudo H."/>
            <person name="Hosoiri T."/>
            <person name="Kaku Y."/>
            <person name="Kodaira H."/>
            <person name="Kondo H."/>
            <person name="Sugawara M."/>
            <person name="Takahashi M."/>
            <person name="Kanda K."/>
            <person name="Yokoi T."/>
            <person name="Furuya T."/>
            <person name="Kikkawa E."/>
            <person name="Omura Y."/>
            <person name="Abe K."/>
            <person name="Kamihara K."/>
            <person name="Katsuta N."/>
            <person name="Sato K."/>
            <person name="Tanikawa M."/>
            <person name="Yamazaki M."/>
            <person name="Ninomiya K."/>
            <person name="Ishibashi T."/>
            <person name="Yamashita H."/>
            <person name="Murakawa K."/>
            <person name="Fujimori K."/>
            <person name="Tanai H."/>
            <person name="Kimata M."/>
            <person name="Watanabe M."/>
            <person name="Hiraoka S."/>
            <person name="Chiba Y."/>
            <person name="Ishida S."/>
            <person name="Ono Y."/>
            <person name="Takiguchi S."/>
            <person name="Watanabe S."/>
            <person name="Yosida M."/>
            <person name="Hotuta T."/>
            <person name="Kusano J."/>
            <person name="Kanehori K."/>
            <person name="Takahashi-Fujii A."/>
            <person name="Hara H."/>
            <person name="Tanase T.-O."/>
            <person name="Nomura Y."/>
            <person name="Togiya S."/>
            <person name="Komai F."/>
            <person name="Hara R."/>
            <person name="Takeuchi K."/>
            <person name="Arita M."/>
            <person name="Imose N."/>
            <person name="Musashino K."/>
            <person name="Yuuki H."/>
            <person name="Oshima A."/>
            <person name="Sasaki N."/>
            <person name="Aotsuka S."/>
            <person name="Yoshikawa Y."/>
            <person name="Matsunawa H."/>
            <person name="Ichihara T."/>
            <person name="Shiohata N."/>
            <person name="Sano S."/>
            <person name="Moriya S."/>
            <person name="Momiyama H."/>
            <person name="Satoh N."/>
            <person name="Takami S."/>
            <person name="Terashima Y."/>
            <person name="Suzuki O."/>
            <person name="Nakagawa S."/>
            <person name="Senoh A."/>
            <person name="Mizoguchi H."/>
            <person name="Goto Y."/>
            <person name="Shimizu F."/>
            <person name="Wakebe H."/>
            <person name="Hishigaki H."/>
            <person name="Watanabe T."/>
            <person name="Sugiyama A."/>
            <person name="Takemoto M."/>
            <person name="Kawakami B."/>
            <person name="Yamazaki M."/>
            <person name="Watanabe K."/>
            <person name="Kumagai A."/>
            <person name="Itakura S."/>
            <person name="Fukuzumi Y."/>
            <person name="Fujimori Y."/>
            <person name="Komiyama M."/>
            <person name="Tashiro H."/>
            <person name="Tanigami A."/>
            <person name="Fujiwara T."/>
            <person name="Ono T."/>
            <person name="Yamada K."/>
            <person name="Fujii Y."/>
            <person name="Ozaki K."/>
            <person name="Hirao M."/>
            <person name="Ohmori Y."/>
            <person name="Kawabata A."/>
            <person name="Hikiji T."/>
            <person name="Kobatake N."/>
            <person name="Inagaki H."/>
            <person name="Ikema Y."/>
            <person name="Okamoto S."/>
            <person name="Okitani R."/>
            <person name="Kawakami T."/>
            <person name="Noguchi S."/>
            <person name="Itoh T."/>
            <person name="Shigeta K."/>
            <person name="Senba T."/>
            <person name="Matsumura K."/>
            <person name="Nakajima Y."/>
            <person name="Mizuno T."/>
            <person name="Morinaga M."/>
            <person name="Sasaki M."/>
            <person name="Togashi T."/>
            <person name="Oyama M."/>
            <person name="Hata H."/>
            <person name="Watanabe M."/>
            <person name="Komatsu T."/>
            <person name="Mizushima-Sugano J."/>
            <person name="Satoh T."/>
            <person name="Shirai Y."/>
            <person name="Takahashi Y."/>
            <person name="Nakagawa K."/>
            <person name="Okumura K."/>
            <person name="Nagase T."/>
            <person name="Nomura N."/>
            <person name="Kikuchi H."/>
            <person name="Masuho Y."/>
            <person name="Yamashita R."/>
            <person name="Nakai K."/>
            <person name="Yada T."/>
            <person name="Nakamura Y."/>
            <person name="Ohara O."/>
            <person name="Isogai T."/>
            <person name="Sugano S."/>
        </authorList>
    </citation>
    <scope>NUCLEOTIDE SEQUENCE [LARGE SCALE MRNA] (ISOFORM 1)</scope>
    <source>
        <tissue>Testis</tissue>
    </source>
</reference>
<reference key="3">
    <citation type="journal article" date="2003" name="Nature">
        <title>The male-specific region of the human Y chromosome is a mosaic of discrete sequence classes.</title>
        <authorList>
            <person name="Skaletsky H."/>
            <person name="Kuroda-Kawaguchi T."/>
            <person name="Minx P.J."/>
            <person name="Cordum H.S."/>
            <person name="Hillier L.W."/>
            <person name="Brown L.G."/>
            <person name="Repping S."/>
            <person name="Pyntikova T."/>
            <person name="Ali J."/>
            <person name="Bieri T."/>
            <person name="Chinwalla A."/>
            <person name="Delehaunty A."/>
            <person name="Delehaunty K."/>
            <person name="Du H."/>
            <person name="Fewell G."/>
            <person name="Fulton L."/>
            <person name="Fulton R."/>
            <person name="Graves T.A."/>
            <person name="Hou S.-F."/>
            <person name="Latrielle P."/>
            <person name="Leonard S."/>
            <person name="Mardis E."/>
            <person name="Maupin R."/>
            <person name="McPherson J."/>
            <person name="Miner T."/>
            <person name="Nash W."/>
            <person name="Nguyen C."/>
            <person name="Ozersky P."/>
            <person name="Pepin K."/>
            <person name="Rock S."/>
            <person name="Rohlfing T."/>
            <person name="Scott K."/>
            <person name="Schultz B."/>
            <person name="Strong C."/>
            <person name="Tin-Wollam A."/>
            <person name="Yang S.-P."/>
            <person name="Waterston R.H."/>
            <person name="Wilson R.K."/>
            <person name="Rozen S."/>
            <person name="Page D.C."/>
        </authorList>
    </citation>
    <scope>NUCLEOTIDE SEQUENCE [LARGE SCALE GENOMIC DNA]</scope>
</reference>
<reference key="4">
    <citation type="journal article" date="2004" name="Genome Res.">
        <title>The status, quality, and expansion of the NIH full-length cDNA project: the Mammalian Gene Collection (MGC).</title>
        <authorList>
            <consortium name="The MGC Project Team"/>
        </authorList>
    </citation>
    <scope>NUCLEOTIDE SEQUENCE [LARGE SCALE MRNA] (ISOFORM 1)</scope>
    <source>
        <tissue>Testis</tissue>
    </source>
</reference>
<dbReference type="EMBL" id="X76060">
    <property type="protein sequence ID" value="CAA53660.1"/>
    <property type="molecule type" value="mRNA"/>
</dbReference>
<dbReference type="EMBL" id="AK313597">
    <property type="protein sequence ID" value="BAG36363.1"/>
    <property type="molecule type" value="mRNA"/>
</dbReference>
<dbReference type="EMBL" id="AC023342">
    <property type="status" value="NOT_ANNOTATED_CDS"/>
    <property type="molecule type" value="Genomic_DNA"/>
</dbReference>
<dbReference type="EMBL" id="AC007320">
    <property type="status" value="NOT_ANNOTATED_CDS"/>
    <property type="molecule type" value="Genomic_DNA"/>
</dbReference>
<dbReference type="EMBL" id="BC030018">
    <property type="protein sequence ID" value="AAH30018.1"/>
    <property type="molecule type" value="mRNA"/>
</dbReference>
<dbReference type="EMBL" id="BC152392">
    <property type="protein sequence ID" value="AAI52393.1"/>
    <property type="molecule type" value="mRNA"/>
</dbReference>
<dbReference type="CCDS" id="CCDS35483.1">
    <molecule id="Q15415-1"/>
</dbReference>
<dbReference type="CCDS" id="CCDS35484.1">
    <molecule id="Q15415-1"/>
</dbReference>
<dbReference type="PIR" id="B49418">
    <property type="entry name" value="B49418"/>
</dbReference>
<dbReference type="RefSeq" id="NP_001006117.2">
    <molecule id="Q15415-1"/>
    <property type="nucleotide sequence ID" value="NM_001006117.3"/>
</dbReference>
<dbReference type="RefSeq" id="NP_001290339.1">
    <molecule id="Q15415-2"/>
    <property type="nucleotide sequence ID" value="NM_001303410.2"/>
</dbReference>
<dbReference type="RefSeq" id="NP_689798.1">
    <molecule id="Q15415-1"/>
    <property type="nucleotide sequence ID" value="NM_152585.3"/>
</dbReference>
<dbReference type="BioGRID" id="127736">
    <property type="interactions" value="39"/>
</dbReference>
<dbReference type="BioGRID" id="132082">
    <property type="interactions" value="29"/>
</dbReference>
<dbReference type="FunCoup" id="Q15415">
    <property type="interactions" value="15"/>
</dbReference>
<dbReference type="IntAct" id="Q15415">
    <property type="interactions" value="35"/>
</dbReference>
<dbReference type="MINT" id="Q15415"/>
<dbReference type="STRING" id="9606.ENSP00000250831"/>
<dbReference type="GlyGen" id="Q15415">
    <property type="glycosylation" value="1 site, 1 O-linked glycan (1 site)"/>
</dbReference>
<dbReference type="iPTMnet" id="Q15415"/>
<dbReference type="PhosphoSitePlus" id="Q15415"/>
<dbReference type="BioMuta" id="RBMY1J"/>
<dbReference type="DMDM" id="166199747"/>
<dbReference type="MassIVE" id="Q15415"/>
<dbReference type="PeptideAtlas" id="Q15415"/>
<dbReference type="ProteomicsDB" id="60580">
    <molecule id="Q15415-1"/>
</dbReference>
<dbReference type="ProteomicsDB" id="60581">
    <molecule id="Q15415-2"/>
</dbReference>
<dbReference type="Antibodypedia" id="21887">
    <property type="antibodies" value="81 antibodies from 14 providers"/>
</dbReference>
<dbReference type="Antibodypedia" id="69611">
    <property type="antibodies" value="3 antibodies from 2 providers"/>
</dbReference>
<dbReference type="DNASU" id="159163"/>
<dbReference type="Ensembl" id="ENST00000250831.6">
    <molecule id="Q15415-1"/>
    <property type="protein sequence ID" value="ENSP00000250831.5"/>
    <property type="gene ID" value="ENSG00000226941.9"/>
</dbReference>
<dbReference type="Ensembl" id="ENST00000303766.12">
    <molecule id="Q15415-1"/>
    <property type="protein sequence ID" value="ENSP00000307155.7"/>
    <property type="gene ID" value="ENSG00000169800.14"/>
</dbReference>
<dbReference type="GeneID" id="159163"/>
<dbReference type="GeneID" id="378951"/>
<dbReference type="KEGG" id="hsa:159163"/>
<dbReference type="KEGG" id="hsa:378951"/>
<dbReference type="MANE-Select" id="ENST00000250831.6">
    <property type="protein sequence ID" value="ENSP00000250831.5"/>
    <property type="RefSeq nucleotide sequence ID" value="NM_001006117.4"/>
    <property type="RefSeq protein sequence ID" value="NP_001006117.2"/>
</dbReference>
<dbReference type="MANE-Select" id="ENST00000303766.12">
    <property type="protein sequence ID" value="ENSP00000307155.7"/>
    <property type="RefSeq nucleotide sequence ID" value="NM_152585.3"/>
    <property type="RefSeq protein sequence ID" value="NP_689798.1"/>
</dbReference>
<dbReference type="UCSC" id="uc004fva.4">
    <molecule id="Q15415-1"/>
    <property type="organism name" value="human"/>
</dbReference>
<dbReference type="AGR" id="HGNC:23917"/>
<dbReference type="AGR" id="HGNC:23974"/>
<dbReference type="CTD" id="159163"/>
<dbReference type="CTD" id="378951"/>
<dbReference type="GeneCards" id="RBMY1F"/>
<dbReference type="GeneCards" id="RBMY1J"/>
<dbReference type="HGNC" id="HGNC:23974">
    <property type="gene designation" value="RBMY1F"/>
</dbReference>
<dbReference type="HGNC" id="HGNC:23917">
    <property type="gene designation" value="RBMY1J"/>
</dbReference>
<dbReference type="HPA" id="ENSG00000169800">
    <property type="expression patterns" value="Tissue enriched (testis)"/>
</dbReference>
<dbReference type="HPA" id="ENSG00000226941">
    <property type="expression patterns" value="Tissue enriched (testis)"/>
</dbReference>
<dbReference type="MIM" id="400006">
    <property type="type" value="gene"/>
</dbReference>
<dbReference type="neXtProt" id="NX_Q15415"/>
<dbReference type="PharmGKB" id="PA134946298"/>
<dbReference type="VEuPathDB" id="HostDB:ENSG00000169800"/>
<dbReference type="VEuPathDB" id="HostDB:ENSG00000226941"/>
<dbReference type="GeneTree" id="ENSGT00940000163524"/>
<dbReference type="HOGENOM" id="CLU_042286_0_0_1"/>
<dbReference type="InParanoid" id="Q15415"/>
<dbReference type="OMA" id="FQSDCRR"/>
<dbReference type="PAN-GO" id="Q15415">
    <property type="GO annotations" value="3 GO annotations based on evolutionary models"/>
</dbReference>
<dbReference type="PhylomeDB" id="Q15415"/>
<dbReference type="TreeFam" id="TF331833"/>
<dbReference type="PathwayCommons" id="Q15415"/>
<dbReference type="SignaLink" id="Q15415"/>
<dbReference type="BioGRID-ORCS" id="159163">
    <property type="hits" value="17 hits in 282 CRISPR screens"/>
</dbReference>
<dbReference type="BioGRID-ORCS" id="378951">
    <property type="hits" value="14 hits in 282 CRISPR screens"/>
</dbReference>
<dbReference type="Pharos" id="Q15415">
    <property type="development level" value="Tdark"/>
</dbReference>
<dbReference type="PRO" id="PR:Q15415"/>
<dbReference type="Proteomes" id="UP000005640">
    <property type="component" value="Chromosome Y"/>
</dbReference>
<dbReference type="RNAct" id="Q15415">
    <property type="molecule type" value="protein"/>
</dbReference>
<dbReference type="Bgee" id="ENSG00000169800">
    <property type="expression patterns" value="Expressed in male germ line stem cell (sensu Vertebrata) in testis and 11 other cell types or tissues"/>
</dbReference>
<dbReference type="GO" id="GO:0005730">
    <property type="term" value="C:nucleolus"/>
    <property type="evidence" value="ECO:0000314"/>
    <property type="project" value="HPA"/>
</dbReference>
<dbReference type="GO" id="GO:0005654">
    <property type="term" value="C:nucleoplasm"/>
    <property type="evidence" value="ECO:0000314"/>
    <property type="project" value="HPA"/>
</dbReference>
<dbReference type="GO" id="GO:0005681">
    <property type="term" value="C:spliceosomal complex"/>
    <property type="evidence" value="ECO:0000318"/>
    <property type="project" value="GO_Central"/>
</dbReference>
<dbReference type="GO" id="GO:0042802">
    <property type="term" value="F:identical protein binding"/>
    <property type="evidence" value="ECO:0000353"/>
    <property type="project" value="IntAct"/>
</dbReference>
<dbReference type="GO" id="GO:0003723">
    <property type="term" value="F:RNA binding"/>
    <property type="evidence" value="ECO:0000318"/>
    <property type="project" value="GO_Central"/>
</dbReference>
<dbReference type="GO" id="GO:0006397">
    <property type="term" value="P:mRNA processing"/>
    <property type="evidence" value="ECO:0007669"/>
    <property type="project" value="UniProtKB-KW"/>
</dbReference>
<dbReference type="GO" id="GO:0048026">
    <property type="term" value="P:positive regulation of mRNA splicing, via spliceosome"/>
    <property type="evidence" value="ECO:0000318"/>
    <property type="project" value="GO_Central"/>
</dbReference>
<dbReference type="GO" id="GO:0008380">
    <property type="term" value="P:RNA splicing"/>
    <property type="evidence" value="ECO:0007669"/>
    <property type="project" value="UniProtKB-KW"/>
</dbReference>
<dbReference type="CDD" id="cd12382">
    <property type="entry name" value="RRM_RBMX_like"/>
    <property type="match status" value="1"/>
</dbReference>
<dbReference type="FunFam" id="3.30.70.330:FF:000470">
    <property type="entry name" value="RNA-binding motif protein, Y chromosome, family 1 member F/J"/>
    <property type="match status" value="1"/>
</dbReference>
<dbReference type="Gene3D" id="3.30.70.330">
    <property type="match status" value="1"/>
</dbReference>
<dbReference type="InterPro" id="IPR012677">
    <property type="entry name" value="Nucleotide-bd_a/b_plait_sf"/>
</dbReference>
<dbReference type="InterPro" id="IPR035979">
    <property type="entry name" value="RBD_domain_sf"/>
</dbReference>
<dbReference type="InterPro" id="IPR050441">
    <property type="entry name" value="RBM"/>
</dbReference>
<dbReference type="InterPro" id="IPR012604">
    <property type="entry name" value="RBM1CTR"/>
</dbReference>
<dbReference type="InterPro" id="IPR000504">
    <property type="entry name" value="RRM_dom"/>
</dbReference>
<dbReference type="PANTHER" id="PTHR48034">
    <property type="entry name" value="TRANSFORMER-2 SEX-DETERMINING PROTEIN-RELATED"/>
    <property type="match status" value="1"/>
</dbReference>
<dbReference type="Pfam" id="PF08081">
    <property type="entry name" value="RBM1CTR"/>
    <property type="match status" value="1"/>
</dbReference>
<dbReference type="Pfam" id="PF00076">
    <property type="entry name" value="RRM_1"/>
    <property type="match status" value="1"/>
</dbReference>
<dbReference type="SMART" id="SM00360">
    <property type="entry name" value="RRM"/>
    <property type="match status" value="1"/>
</dbReference>
<dbReference type="SUPFAM" id="SSF54928">
    <property type="entry name" value="RNA-binding domain, RBD"/>
    <property type="match status" value="1"/>
</dbReference>
<dbReference type="PROSITE" id="PS50102">
    <property type="entry name" value="RRM"/>
    <property type="match status" value="1"/>
</dbReference>
<organism>
    <name type="scientific">Homo sapiens</name>
    <name type="common">Human</name>
    <dbReference type="NCBI Taxonomy" id="9606"/>
    <lineage>
        <taxon>Eukaryota</taxon>
        <taxon>Metazoa</taxon>
        <taxon>Chordata</taxon>
        <taxon>Craniata</taxon>
        <taxon>Vertebrata</taxon>
        <taxon>Euteleostomi</taxon>
        <taxon>Mammalia</taxon>
        <taxon>Eutheria</taxon>
        <taxon>Euarchontoglires</taxon>
        <taxon>Primates</taxon>
        <taxon>Haplorrhini</taxon>
        <taxon>Catarrhini</taxon>
        <taxon>Hominidae</taxon>
        <taxon>Homo</taxon>
    </lineage>
</organism>
<sequence length="496" mass="55728">MVEADHPGKLFIGGLNRETNEKMLKAVFGKHGPISEVLLIKDRTSKSRGFAFITFENPADAKNAAKDMNGTSLHGKAIKVEQAKKPSFQSGGRRRPPASSRNRSPSGSLRSARGSSGGTRGWLPSHEGHLDDGGYTPDLKMSYSRGLIPVKRGPSSRSGGPPPKKSAPSAVARSNSWMGSQGPMSQRRENYGVPPRRATISSWRNDRMSTRHDGYATNDGNHPSCQETRDYAPPSRGYAYRDNGHSNRDEHSSRGYRNHRSSRETRDYAPPSRGHAYRDYGHSRRDESYSRGYRNHRSSRETREYAPPSRGHGYRDYGHSRRHESYSRGYRNHPSSRETRDYAPPHRDYAYRDYGHSSWDEHSSRGYSYHDGYGEALGRDHSEHLSGSSYRDALQRYGTSHGAPPARGPRMSYGGSTCHAYSNTRDRYGRSWESYSSCGDFHYCDREHVCRKDQRNPPSLGRVLPDPREAYGSSSYVASIVDGGESRSEKGDSSRY</sequence>
<evidence type="ECO:0000255" key="1">
    <source>
        <dbReference type="PROSITE-ProRule" id="PRU00176"/>
    </source>
</evidence>
<evidence type="ECO:0000256" key="2">
    <source>
        <dbReference type="SAM" id="MobiDB-lite"/>
    </source>
</evidence>
<evidence type="ECO:0000269" key="3">
    <source>
    </source>
</evidence>
<evidence type="ECO:0000303" key="4">
    <source>
    </source>
</evidence>
<evidence type="ECO:0000305" key="5"/>
<name>RBY1F_HUMAN</name>
<keyword id="KW-0025">Alternative splicing</keyword>
<keyword id="KW-0507">mRNA processing</keyword>
<keyword id="KW-0508">mRNA splicing</keyword>
<keyword id="KW-0539">Nucleus</keyword>
<keyword id="KW-1185">Reference proteome</keyword>
<keyword id="KW-0694">RNA-binding</keyword>
<protein>
    <recommendedName>
        <fullName>RNA-binding motif protein, Y chromosome, family 1 member F/J</fullName>
    </recommendedName>
    <alternativeName>
        <fullName>Y chromosome RNA recognition motif 2</fullName>
    </alternativeName>
</protein>
<feature type="chain" id="PRO_0000314164" description="RNA-binding motif protein, Y chromosome, family 1 member F/J">
    <location>
        <begin position="1"/>
        <end position="496"/>
    </location>
</feature>
<feature type="domain" description="RRM" evidence="1">
    <location>
        <begin position="8"/>
        <end position="85"/>
    </location>
</feature>
<feature type="region of interest" description="Disordered" evidence="2">
    <location>
        <begin position="81"/>
        <end position="345"/>
    </location>
</feature>
<feature type="region of interest" description="Disordered" evidence="2">
    <location>
        <begin position="452"/>
        <end position="496"/>
    </location>
</feature>
<feature type="compositionally biased region" description="Low complexity" evidence="2">
    <location>
        <begin position="97"/>
        <end position="114"/>
    </location>
</feature>
<feature type="compositionally biased region" description="Low complexity" evidence="2">
    <location>
        <begin position="149"/>
        <end position="159"/>
    </location>
</feature>
<feature type="compositionally biased region" description="Polar residues" evidence="2">
    <location>
        <begin position="175"/>
        <end position="184"/>
    </location>
</feature>
<feature type="compositionally biased region" description="Basic and acidic residues" evidence="2">
    <location>
        <begin position="204"/>
        <end position="214"/>
    </location>
</feature>
<feature type="compositionally biased region" description="Basic and acidic residues" evidence="2">
    <location>
        <begin position="242"/>
        <end position="253"/>
    </location>
</feature>
<feature type="compositionally biased region" description="Basic and acidic residues" evidence="2">
    <location>
        <begin position="276"/>
        <end position="289"/>
    </location>
</feature>
<feature type="compositionally biased region" description="Basic and acidic residues" evidence="2">
    <location>
        <begin position="313"/>
        <end position="326"/>
    </location>
</feature>
<feature type="compositionally biased region" description="Basic and acidic residues" evidence="2">
    <location>
        <begin position="335"/>
        <end position="345"/>
    </location>
</feature>
<feature type="compositionally biased region" description="Basic and acidic residues" evidence="2">
    <location>
        <begin position="484"/>
        <end position="496"/>
    </location>
</feature>
<feature type="splice variant" id="VSP_030217" description="In isoform 2." evidence="4">
    <original>YGTSHGAPPARGPRMSYGGSTCH</original>
    <variation>DLSWCTTCKRASDVLWWKHLPRI</variation>
    <location>
        <begin position="397"/>
        <end position="419"/>
    </location>
</feature>
<feature type="splice variant" id="VSP_030218" description="In isoform 2." evidence="4">
    <location>
        <begin position="420"/>
        <end position="496"/>
    </location>
</feature>
<feature type="sequence conflict" description="In Ref. 1; CAA53660." evidence="5" ref="1">
    <original>P</original>
    <variation>A</variation>
    <location>
        <position position="7"/>
    </location>
</feature>
<proteinExistence type="evidence at protein level"/>
<accession>Q15415</accession>
<accession>B2R916</accession>